<name>YHBQ_ECO8A</name>
<dbReference type="EMBL" id="CU928160">
    <property type="protein sequence ID" value="CAR00119.1"/>
    <property type="molecule type" value="Genomic_DNA"/>
</dbReference>
<dbReference type="RefSeq" id="WP_001345969.1">
    <property type="nucleotide sequence ID" value="NC_011741.1"/>
</dbReference>
<dbReference type="SMR" id="B7M063"/>
<dbReference type="KEGG" id="ecr:ECIAI1_3305"/>
<dbReference type="HOGENOM" id="CLU_135650_0_1_6"/>
<dbReference type="CDD" id="cd10456">
    <property type="entry name" value="GIY-YIG_UPF0213"/>
    <property type="match status" value="1"/>
</dbReference>
<dbReference type="FunFam" id="3.40.1440.10:FF:000002">
    <property type="entry name" value="UPF0213 protein YhbQ"/>
    <property type="match status" value="1"/>
</dbReference>
<dbReference type="Gene3D" id="3.40.1440.10">
    <property type="entry name" value="GIY-YIG endonuclease"/>
    <property type="match status" value="1"/>
</dbReference>
<dbReference type="HAMAP" id="MF_01029">
    <property type="entry name" value="UPF0213"/>
    <property type="match status" value="1"/>
</dbReference>
<dbReference type="InterPro" id="IPR000305">
    <property type="entry name" value="GIY-YIG_endonuc"/>
</dbReference>
<dbReference type="InterPro" id="IPR035901">
    <property type="entry name" value="GIY-YIG_endonuc_sf"/>
</dbReference>
<dbReference type="InterPro" id="IPR050190">
    <property type="entry name" value="UPF0213_domain"/>
</dbReference>
<dbReference type="InterPro" id="IPR022992">
    <property type="entry name" value="UPF0213_GIY-YIG_endonuc"/>
</dbReference>
<dbReference type="PANTHER" id="PTHR34477">
    <property type="entry name" value="UPF0213 PROTEIN YHBQ"/>
    <property type="match status" value="1"/>
</dbReference>
<dbReference type="PANTHER" id="PTHR34477:SF1">
    <property type="entry name" value="UPF0213 PROTEIN YHBQ"/>
    <property type="match status" value="1"/>
</dbReference>
<dbReference type="Pfam" id="PF01541">
    <property type="entry name" value="GIY-YIG"/>
    <property type="match status" value="1"/>
</dbReference>
<dbReference type="SMART" id="SM00465">
    <property type="entry name" value="GIYc"/>
    <property type="match status" value="1"/>
</dbReference>
<dbReference type="SUPFAM" id="SSF82771">
    <property type="entry name" value="GIY-YIG endonuclease"/>
    <property type="match status" value="1"/>
</dbReference>
<dbReference type="PROSITE" id="PS50164">
    <property type="entry name" value="GIY_YIG"/>
    <property type="match status" value="1"/>
</dbReference>
<organism>
    <name type="scientific">Escherichia coli O8 (strain IAI1)</name>
    <dbReference type="NCBI Taxonomy" id="585034"/>
    <lineage>
        <taxon>Bacteria</taxon>
        <taxon>Pseudomonadati</taxon>
        <taxon>Pseudomonadota</taxon>
        <taxon>Gammaproteobacteria</taxon>
        <taxon>Enterobacterales</taxon>
        <taxon>Enterobacteriaceae</taxon>
        <taxon>Escherichia</taxon>
    </lineage>
</organism>
<gene>
    <name evidence="1" type="primary">yhbQ</name>
    <name type="ordered locus">ECIAI1_3305</name>
</gene>
<accession>B7M063</accession>
<comment type="similarity">
    <text evidence="1">Belongs to the UPF0213 family.</text>
</comment>
<feature type="chain" id="PRO_1000135745" description="UPF0213 protein YhbQ">
    <location>
        <begin position="1"/>
        <end position="100"/>
    </location>
</feature>
<feature type="domain" description="GIY-YIG" evidence="1">
    <location>
        <begin position="2"/>
        <end position="77"/>
    </location>
</feature>
<sequence>MTPWYLYLIRTADNKLYTGITTDVERRYQQHQSGKGAKALRGKGELTLAFSAPVGDRSLALRAEYRVKQLTKRQKERLVAEGAGFAELLSSLQTPKIKSD</sequence>
<reference key="1">
    <citation type="journal article" date="2009" name="PLoS Genet.">
        <title>Organised genome dynamics in the Escherichia coli species results in highly diverse adaptive paths.</title>
        <authorList>
            <person name="Touchon M."/>
            <person name="Hoede C."/>
            <person name="Tenaillon O."/>
            <person name="Barbe V."/>
            <person name="Baeriswyl S."/>
            <person name="Bidet P."/>
            <person name="Bingen E."/>
            <person name="Bonacorsi S."/>
            <person name="Bouchier C."/>
            <person name="Bouvet O."/>
            <person name="Calteau A."/>
            <person name="Chiapello H."/>
            <person name="Clermont O."/>
            <person name="Cruveiller S."/>
            <person name="Danchin A."/>
            <person name="Diard M."/>
            <person name="Dossat C."/>
            <person name="Karoui M.E."/>
            <person name="Frapy E."/>
            <person name="Garry L."/>
            <person name="Ghigo J.M."/>
            <person name="Gilles A.M."/>
            <person name="Johnson J."/>
            <person name="Le Bouguenec C."/>
            <person name="Lescat M."/>
            <person name="Mangenot S."/>
            <person name="Martinez-Jehanne V."/>
            <person name="Matic I."/>
            <person name="Nassif X."/>
            <person name="Oztas S."/>
            <person name="Petit M.A."/>
            <person name="Pichon C."/>
            <person name="Rouy Z."/>
            <person name="Ruf C.S."/>
            <person name="Schneider D."/>
            <person name="Tourret J."/>
            <person name="Vacherie B."/>
            <person name="Vallenet D."/>
            <person name="Medigue C."/>
            <person name="Rocha E.P.C."/>
            <person name="Denamur E."/>
        </authorList>
    </citation>
    <scope>NUCLEOTIDE SEQUENCE [LARGE SCALE GENOMIC DNA]</scope>
    <source>
        <strain>IAI1</strain>
    </source>
</reference>
<evidence type="ECO:0000255" key="1">
    <source>
        <dbReference type="HAMAP-Rule" id="MF_01029"/>
    </source>
</evidence>
<proteinExistence type="inferred from homology"/>
<protein>
    <recommendedName>
        <fullName evidence="1">UPF0213 protein YhbQ</fullName>
    </recommendedName>
</protein>